<dbReference type="EC" id="2.3.2.6" evidence="1"/>
<dbReference type="EMBL" id="CP000758">
    <property type="protein sequence ID" value="ABS14991.1"/>
    <property type="molecule type" value="Genomic_DNA"/>
</dbReference>
<dbReference type="SMR" id="A6X187"/>
<dbReference type="STRING" id="439375.Oant_2275"/>
<dbReference type="KEGG" id="oan:Oant_2275"/>
<dbReference type="eggNOG" id="COG2360">
    <property type="taxonomic scope" value="Bacteria"/>
</dbReference>
<dbReference type="HOGENOM" id="CLU_075045_1_1_5"/>
<dbReference type="Proteomes" id="UP000002301">
    <property type="component" value="Chromosome 1"/>
</dbReference>
<dbReference type="GO" id="GO:0005737">
    <property type="term" value="C:cytoplasm"/>
    <property type="evidence" value="ECO:0007669"/>
    <property type="project" value="UniProtKB-SubCell"/>
</dbReference>
<dbReference type="GO" id="GO:0008914">
    <property type="term" value="F:leucyl-tRNA--protein transferase activity"/>
    <property type="evidence" value="ECO:0007669"/>
    <property type="project" value="UniProtKB-UniRule"/>
</dbReference>
<dbReference type="GO" id="GO:0030163">
    <property type="term" value="P:protein catabolic process"/>
    <property type="evidence" value="ECO:0007669"/>
    <property type="project" value="UniProtKB-UniRule"/>
</dbReference>
<dbReference type="FunFam" id="3.40.630.70:FF:000001">
    <property type="entry name" value="Leucyl/phenylalanyl-tRNA--protein transferase"/>
    <property type="match status" value="1"/>
</dbReference>
<dbReference type="Gene3D" id="3.40.630.70">
    <property type="entry name" value="Leucyl/phenylalanyl-tRNA-protein transferase, C-terminal domain"/>
    <property type="match status" value="1"/>
</dbReference>
<dbReference type="Gene3D" id="3.30.70.3550">
    <property type="entry name" value="Leucyl/phenylalanyl-tRNA-protein transferase, N-terminal domain"/>
    <property type="match status" value="1"/>
</dbReference>
<dbReference type="HAMAP" id="MF_00688">
    <property type="entry name" value="Leu_Phe_trans"/>
    <property type="match status" value="1"/>
</dbReference>
<dbReference type="InterPro" id="IPR016181">
    <property type="entry name" value="Acyl_CoA_acyltransferase"/>
</dbReference>
<dbReference type="InterPro" id="IPR004616">
    <property type="entry name" value="Leu/Phe-tRNA_Trfase"/>
</dbReference>
<dbReference type="InterPro" id="IPR042203">
    <property type="entry name" value="Leu/Phe-tRNA_Trfase_C"/>
</dbReference>
<dbReference type="InterPro" id="IPR042221">
    <property type="entry name" value="Leu/Phe-tRNA_Trfase_N"/>
</dbReference>
<dbReference type="NCBIfam" id="TIGR00667">
    <property type="entry name" value="aat"/>
    <property type="match status" value="1"/>
</dbReference>
<dbReference type="PANTHER" id="PTHR30098">
    <property type="entry name" value="LEUCYL/PHENYLALANYL-TRNA--PROTEIN TRANSFERASE"/>
    <property type="match status" value="1"/>
</dbReference>
<dbReference type="PANTHER" id="PTHR30098:SF2">
    <property type="entry name" value="LEUCYL_PHENYLALANYL-TRNA--PROTEIN TRANSFERASE"/>
    <property type="match status" value="1"/>
</dbReference>
<dbReference type="Pfam" id="PF03588">
    <property type="entry name" value="Leu_Phe_trans"/>
    <property type="match status" value="1"/>
</dbReference>
<dbReference type="SUPFAM" id="SSF55729">
    <property type="entry name" value="Acyl-CoA N-acyltransferases (Nat)"/>
    <property type="match status" value="1"/>
</dbReference>
<sequence length="204" mass="23005">MTAGVSPDDYSIEPELLLRAYATGIFPMAEEADDPEVFWVRPERRGVIPLDGFHMPKSLQKTIRQGIFDIKLDNDFDGVIEGCASGTGERARTWINGPIREAYKNLFEIGHCHTVEAWHDGQLVGGLYGVTLGRAFFGESMFTRKRDASKVCLAYLVQHLVKQGFVLLDTQFTTPHLERFGAVEVPRKKYEKLLENALDGIVRF</sequence>
<proteinExistence type="inferred from homology"/>
<reference key="1">
    <citation type="journal article" date="2011" name="J. Bacteriol.">
        <title>Genome of Ochrobactrum anthropi ATCC 49188 T, a versatile opportunistic pathogen and symbiont of several eukaryotic hosts.</title>
        <authorList>
            <person name="Chain P.S."/>
            <person name="Lang D.M."/>
            <person name="Comerci D.J."/>
            <person name="Malfatti S.A."/>
            <person name="Vergez L.M."/>
            <person name="Shin M."/>
            <person name="Ugalde R.A."/>
            <person name="Garcia E."/>
            <person name="Tolmasky M.E."/>
        </authorList>
    </citation>
    <scope>NUCLEOTIDE SEQUENCE [LARGE SCALE GENOMIC DNA]</scope>
    <source>
        <strain>ATCC 49188 / DSM 6882 / CCUG 24695 / JCM 21032 / LMG 3331 / NBRC 15819 / NCTC 12168 / Alc 37</strain>
    </source>
</reference>
<evidence type="ECO:0000255" key="1">
    <source>
        <dbReference type="HAMAP-Rule" id="MF_00688"/>
    </source>
</evidence>
<gene>
    <name evidence="1" type="primary">aat</name>
    <name type="ordered locus">Oant_2275</name>
</gene>
<comment type="function">
    <text evidence="1">Functions in the N-end rule pathway of protein degradation where it conjugates Leu, Phe and, less efficiently, Met from aminoacyl-tRNAs to the N-termini of proteins containing an N-terminal arginine or lysine.</text>
</comment>
<comment type="catalytic activity">
    <reaction evidence="1">
        <text>N-terminal L-lysyl-[protein] + L-leucyl-tRNA(Leu) = N-terminal L-leucyl-L-lysyl-[protein] + tRNA(Leu) + H(+)</text>
        <dbReference type="Rhea" id="RHEA:12340"/>
        <dbReference type="Rhea" id="RHEA-COMP:9613"/>
        <dbReference type="Rhea" id="RHEA-COMP:9622"/>
        <dbReference type="Rhea" id="RHEA-COMP:12670"/>
        <dbReference type="Rhea" id="RHEA-COMP:12671"/>
        <dbReference type="ChEBI" id="CHEBI:15378"/>
        <dbReference type="ChEBI" id="CHEBI:65249"/>
        <dbReference type="ChEBI" id="CHEBI:78442"/>
        <dbReference type="ChEBI" id="CHEBI:78494"/>
        <dbReference type="ChEBI" id="CHEBI:133043"/>
        <dbReference type="EC" id="2.3.2.6"/>
    </reaction>
</comment>
<comment type="catalytic activity">
    <reaction evidence="1">
        <text>N-terminal L-arginyl-[protein] + L-leucyl-tRNA(Leu) = N-terminal L-leucyl-L-arginyl-[protein] + tRNA(Leu) + H(+)</text>
        <dbReference type="Rhea" id="RHEA:50416"/>
        <dbReference type="Rhea" id="RHEA-COMP:9613"/>
        <dbReference type="Rhea" id="RHEA-COMP:9622"/>
        <dbReference type="Rhea" id="RHEA-COMP:12672"/>
        <dbReference type="Rhea" id="RHEA-COMP:12673"/>
        <dbReference type="ChEBI" id="CHEBI:15378"/>
        <dbReference type="ChEBI" id="CHEBI:64719"/>
        <dbReference type="ChEBI" id="CHEBI:78442"/>
        <dbReference type="ChEBI" id="CHEBI:78494"/>
        <dbReference type="ChEBI" id="CHEBI:133044"/>
        <dbReference type="EC" id="2.3.2.6"/>
    </reaction>
</comment>
<comment type="catalytic activity">
    <reaction evidence="1">
        <text>L-phenylalanyl-tRNA(Phe) + an N-terminal L-alpha-aminoacyl-[protein] = an N-terminal L-phenylalanyl-L-alpha-aminoacyl-[protein] + tRNA(Phe)</text>
        <dbReference type="Rhea" id="RHEA:43632"/>
        <dbReference type="Rhea" id="RHEA-COMP:9668"/>
        <dbReference type="Rhea" id="RHEA-COMP:9699"/>
        <dbReference type="Rhea" id="RHEA-COMP:10636"/>
        <dbReference type="Rhea" id="RHEA-COMP:10637"/>
        <dbReference type="ChEBI" id="CHEBI:78442"/>
        <dbReference type="ChEBI" id="CHEBI:78531"/>
        <dbReference type="ChEBI" id="CHEBI:78597"/>
        <dbReference type="ChEBI" id="CHEBI:83561"/>
        <dbReference type="EC" id="2.3.2.6"/>
    </reaction>
</comment>
<comment type="subcellular location">
    <subcellularLocation>
        <location evidence="1">Cytoplasm</location>
    </subcellularLocation>
</comment>
<comment type="similarity">
    <text evidence="1">Belongs to the L/F-transferase family.</text>
</comment>
<accession>A6X187</accession>
<organism>
    <name type="scientific">Brucella anthropi (strain ATCC 49188 / DSM 6882 / CCUG 24695 / JCM 21032 / LMG 3331 / NBRC 15819 / NCTC 12168 / Alc 37)</name>
    <name type="common">Ochrobactrum anthropi</name>
    <dbReference type="NCBI Taxonomy" id="439375"/>
    <lineage>
        <taxon>Bacteria</taxon>
        <taxon>Pseudomonadati</taxon>
        <taxon>Pseudomonadota</taxon>
        <taxon>Alphaproteobacteria</taxon>
        <taxon>Hyphomicrobiales</taxon>
        <taxon>Brucellaceae</taxon>
        <taxon>Brucella/Ochrobactrum group</taxon>
        <taxon>Brucella</taxon>
    </lineage>
</organism>
<keyword id="KW-0012">Acyltransferase</keyword>
<keyword id="KW-0963">Cytoplasm</keyword>
<keyword id="KW-1185">Reference proteome</keyword>
<keyword id="KW-0808">Transferase</keyword>
<protein>
    <recommendedName>
        <fullName evidence="1">Leucyl/phenylalanyl-tRNA--protein transferase</fullName>
        <ecNumber evidence="1">2.3.2.6</ecNumber>
    </recommendedName>
    <alternativeName>
        <fullName evidence="1">L/F-transferase</fullName>
    </alternativeName>
    <alternativeName>
        <fullName evidence="1">Leucyltransferase</fullName>
    </alternativeName>
    <alternativeName>
        <fullName evidence="1">Phenyalanyltransferase</fullName>
    </alternativeName>
</protein>
<name>LFTR_BRUA4</name>
<feature type="chain" id="PRO_1000045108" description="Leucyl/phenylalanyl-tRNA--protein transferase">
    <location>
        <begin position="1"/>
        <end position="204"/>
    </location>
</feature>